<sequence>MKALTARQQEVFDLIRDHISQTGMPPTRAEIAQRLGFRSPNAAEEHLKALARKGVLEIVSGASRGIRLLQEEEDGLPLVGRVAAGEPLLAQQHIEGHYQVDPSLFKPSADFLLRVSGMSMKDIGIMDGDLLAVHKTQDVRNGQVVVARIDDEVTVKRLKKQGNKVELLPENSEFTPIVVDLREQSFTIEGLAVGVIRNGEWL</sequence>
<dbReference type="EC" id="3.4.21.88" evidence="1"/>
<dbReference type="EMBL" id="FM200053">
    <property type="protein sequence ID" value="CAR62047.1"/>
    <property type="molecule type" value="Genomic_DNA"/>
</dbReference>
<dbReference type="RefSeq" id="WP_000646079.1">
    <property type="nucleotide sequence ID" value="NC_011147.1"/>
</dbReference>
<dbReference type="SMR" id="B5BJW0"/>
<dbReference type="MEROPS" id="S24.001"/>
<dbReference type="KEGG" id="sek:SSPA3763"/>
<dbReference type="HOGENOM" id="CLU_066192_45_3_6"/>
<dbReference type="Proteomes" id="UP000001869">
    <property type="component" value="Chromosome"/>
</dbReference>
<dbReference type="GO" id="GO:0003677">
    <property type="term" value="F:DNA binding"/>
    <property type="evidence" value="ECO:0007669"/>
    <property type="project" value="UniProtKB-UniRule"/>
</dbReference>
<dbReference type="GO" id="GO:0004252">
    <property type="term" value="F:serine-type endopeptidase activity"/>
    <property type="evidence" value="ECO:0007669"/>
    <property type="project" value="UniProtKB-UniRule"/>
</dbReference>
<dbReference type="GO" id="GO:0006281">
    <property type="term" value="P:DNA repair"/>
    <property type="evidence" value="ECO:0007669"/>
    <property type="project" value="UniProtKB-UniRule"/>
</dbReference>
<dbReference type="GO" id="GO:0006260">
    <property type="term" value="P:DNA replication"/>
    <property type="evidence" value="ECO:0007669"/>
    <property type="project" value="UniProtKB-UniRule"/>
</dbReference>
<dbReference type="GO" id="GO:0045892">
    <property type="term" value="P:negative regulation of DNA-templated transcription"/>
    <property type="evidence" value="ECO:0007669"/>
    <property type="project" value="UniProtKB-UniRule"/>
</dbReference>
<dbReference type="GO" id="GO:0006508">
    <property type="term" value="P:proteolysis"/>
    <property type="evidence" value="ECO:0007669"/>
    <property type="project" value="InterPro"/>
</dbReference>
<dbReference type="GO" id="GO:0009432">
    <property type="term" value="P:SOS response"/>
    <property type="evidence" value="ECO:0007669"/>
    <property type="project" value="UniProtKB-UniRule"/>
</dbReference>
<dbReference type="CDD" id="cd06529">
    <property type="entry name" value="S24_LexA-like"/>
    <property type="match status" value="1"/>
</dbReference>
<dbReference type="FunFam" id="1.10.10.10:FF:000009">
    <property type="entry name" value="LexA repressor"/>
    <property type="match status" value="1"/>
</dbReference>
<dbReference type="FunFam" id="2.10.109.10:FF:000001">
    <property type="entry name" value="LexA repressor"/>
    <property type="match status" value="1"/>
</dbReference>
<dbReference type="Gene3D" id="2.10.109.10">
    <property type="entry name" value="Umud Fragment, subunit A"/>
    <property type="match status" value="1"/>
</dbReference>
<dbReference type="Gene3D" id="1.10.10.10">
    <property type="entry name" value="Winged helix-like DNA-binding domain superfamily/Winged helix DNA-binding domain"/>
    <property type="match status" value="1"/>
</dbReference>
<dbReference type="HAMAP" id="MF_00015">
    <property type="entry name" value="LexA"/>
    <property type="match status" value="1"/>
</dbReference>
<dbReference type="InterPro" id="IPR006200">
    <property type="entry name" value="LexA"/>
</dbReference>
<dbReference type="InterPro" id="IPR039418">
    <property type="entry name" value="LexA-like"/>
</dbReference>
<dbReference type="InterPro" id="IPR036286">
    <property type="entry name" value="LexA/Signal_pep-like_sf"/>
</dbReference>
<dbReference type="InterPro" id="IPR006199">
    <property type="entry name" value="LexA_DNA-bd_dom"/>
</dbReference>
<dbReference type="InterPro" id="IPR050077">
    <property type="entry name" value="LexA_repressor"/>
</dbReference>
<dbReference type="InterPro" id="IPR006197">
    <property type="entry name" value="Peptidase_S24_LexA"/>
</dbReference>
<dbReference type="InterPro" id="IPR015927">
    <property type="entry name" value="Peptidase_S24_S26A/B/C"/>
</dbReference>
<dbReference type="InterPro" id="IPR036388">
    <property type="entry name" value="WH-like_DNA-bd_sf"/>
</dbReference>
<dbReference type="InterPro" id="IPR036390">
    <property type="entry name" value="WH_DNA-bd_sf"/>
</dbReference>
<dbReference type="NCBIfam" id="TIGR00498">
    <property type="entry name" value="lexA"/>
    <property type="match status" value="1"/>
</dbReference>
<dbReference type="PANTHER" id="PTHR33516">
    <property type="entry name" value="LEXA REPRESSOR"/>
    <property type="match status" value="1"/>
</dbReference>
<dbReference type="PANTHER" id="PTHR33516:SF2">
    <property type="entry name" value="LEXA REPRESSOR-RELATED"/>
    <property type="match status" value="1"/>
</dbReference>
<dbReference type="Pfam" id="PF01726">
    <property type="entry name" value="LexA_DNA_bind"/>
    <property type="match status" value="1"/>
</dbReference>
<dbReference type="Pfam" id="PF00717">
    <property type="entry name" value="Peptidase_S24"/>
    <property type="match status" value="1"/>
</dbReference>
<dbReference type="PRINTS" id="PR00726">
    <property type="entry name" value="LEXASERPTASE"/>
</dbReference>
<dbReference type="SUPFAM" id="SSF51306">
    <property type="entry name" value="LexA/Signal peptidase"/>
    <property type="match status" value="1"/>
</dbReference>
<dbReference type="SUPFAM" id="SSF46785">
    <property type="entry name" value="Winged helix' DNA-binding domain"/>
    <property type="match status" value="1"/>
</dbReference>
<evidence type="ECO:0000255" key="1">
    <source>
        <dbReference type="HAMAP-Rule" id="MF_00015"/>
    </source>
</evidence>
<gene>
    <name evidence="1" type="primary">lexA</name>
    <name type="ordered locus">SSPA3763</name>
</gene>
<organism>
    <name type="scientific">Salmonella paratyphi A (strain AKU_12601)</name>
    <dbReference type="NCBI Taxonomy" id="554290"/>
    <lineage>
        <taxon>Bacteria</taxon>
        <taxon>Pseudomonadati</taxon>
        <taxon>Pseudomonadota</taxon>
        <taxon>Gammaproteobacteria</taxon>
        <taxon>Enterobacterales</taxon>
        <taxon>Enterobacteriaceae</taxon>
        <taxon>Salmonella</taxon>
    </lineage>
</organism>
<feature type="chain" id="PRO_1000089596" description="LexA repressor">
    <location>
        <begin position="1"/>
        <end position="202"/>
    </location>
</feature>
<feature type="DNA-binding region" description="H-T-H motif" evidence="1">
    <location>
        <begin position="28"/>
        <end position="48"/>
    </location>
</feature>
<feature type="active site" description="For autocatalytic cleavage activity" evidence="1">
    <location>
        <position position="119"/>
    </location>
</feature>
<feature type="active site" description="For autocatalytic cleavage activity" evidence="1">
    <location>
        <position position="156"/>
    </location>
</feature>
<feature type="site" description="Cleavage; by autolysis" evidence="1">
    <location>
        <begin position="84"/>
        <end position="85"/>
    </location>
</feature>
<accession>B5BJW0</accession>
<proteinExistence type="inferred from homology"/>
<comment type="function">
    <text evidence="1">Represses a number of genes involved in the response to DNA damage (SOS response), including recA and lexA. Binds to the 16 bp palindromic sequence 5'-CTGTATATATATACAG-3'. In the presence of single-stranded DNA, RecA interacts with LexA causing an autocatalytic cleavage which disrupts the DNA-binding part of LexA, leading to derepression of the SOS regulon and eventually DNA repair.</text>
</comment>
<comment type="catalytic activity">
    <reaction evidence="1">
        <text>Hydrolysis of Ala-|-Gly bond in repressor LexA.</text>
        <dbReference type="EC" id="3.4.21.88"/>
    </reaction>
</comment>
<comment type="subunit">
    <text evidence="1">Homodimer.</text>
</comment>
<comment type="similarity">
    <text evidence="1">Belongs to the peptidase S24 family.</text>
</comment>
<name>LEXA_SALPK</name>
<reference key="1">
    <citation type="journal article" date="2009" name="BMC Genomics">
        <title>Pseudogene accumulation in the evolutionary histories of Salmonella enterica serovars Paratyphi A and Typhi.</title>
        <authorList>
            <person name="Holt K.E."/>
            <person name="Thomson N.R."/>
            <person name="Wain J."/>
            <person name="Langridge G.C."/>
            <person name="Hasan R."/>
            <person name="Bhutta Z.A."/>
            <person name="Quail M.A."/>
            <person name="Norbertczak H."/>
            <person name="Walker D."/>
            <person name="Simmonds M."/>
            <person name="White B."/>
            <person name="Bason N."/>
            <person name="Mungall K."/>
            <person name="Dougan G."/>
            <person name="Parkhill J."/>
        </authorList>
    </citation>
    <scope>NUCLEOTIDE SEQUENCE [LARGE SCALE GENOMIC DNA]</scope>
    <source>
        <strain>AKU_12601</strain>
    </source>
</reference>
<protein>
    <recommendedName>
        <fullName evidence="1">LexA repressor</fullName>
        <ecNumber evidence="1">3.4.21.88</ecNumber>
    </recommendedName>
</protein>
<keyword id="KW-0068">Autocatalytic cleavage</keyword>
<keyword id="KW-0227">DNA damage</keyword>
<keyword id="KW-0234">DNA repair</keyword>
<keyword id="KW-0235">DNA replication</keyword>
<keyword id="KW-0238">DNA-binding</keyword>
<keyword id="KW-0378">Hydrolase</keyword>
<keyword id="KW-0678">Repressor</keyword>
<keyword id="KW-0742">SOS response</keyword>
<keyword id="KW-0804">Transcription</keyword>
<keyword id="KW-0805">Transcription regulation</keyword>